<accession>Q8RXF1</accession>
<accession>Q0WWB5</accession>
<accession>Q9MA20</accession>
<sequence>MFSSMQILPLEAPPTDGKLGPLPPSQLTDQEVEERELQAEQNNSNLAPPAAVATHTRTIGIIHPPPDIRTIVEKTAQFVSKNGLEFEKRIIVSNEKNAKFNFLKSSDPYHAFYQHKLTEYRAQNKDGAQGTDDSDGTTDPQLDTGAADESEAGDTQPDLQAQFRIPSKPLEAPEPEKYTVRLPEGITGEELDIIKLTAQFVARNGKSFLTGLSNRENNNPQFHFMKPTHSMFTFFTSLVDAYSEVLMPPKDLKEKLRKSAADLTTVLERCLHRLEWDRSQEQQKKKEEDEKELERVQMAMIDWHDFVVVESIDFADEEDEELPPPMTLDEVIRRSKASAMEEDEIVEPGKEVEMEMDEEEVKLVAEGMRAANLEENVKIENVHDEEAPMRIVKNWKRPEDRIPTERDPTKVVISPITGELIPINEMSEHMRISLIDPKFKEQKDRMFAKIRETTLAQDDEIAKNIVGLARLRPDIFGTTEEEVSNAVKAEIEKKKDEQPKQVIWDGHTGSIGRTANQALSQNANGEEQGDGVYGDPNSFPGPAALPPPRPGVPIVRPLPPPPNLALNLPRPPPSAQYPGAPRPLGVPMMQPMHQQHQLTMPGPPGHPQMMMNRPPQMQPGMHVPPPPGSQFAHHMQIPRPYGQLPPSAMGMMQPPPMPGMAPPPPPEEAPPPLPEEPEAKRQKFDESALVPEDQFLAQHPGPATIRVSKPNENDGQFMEITVQSLSENVGSLKEKIAGEIQIPANKQKLSGKAGFLKDNMSLAHYNVGAGEILTLSLRERGGRKR</sequence>
<reference key="1">
    <citation type="journal article" date="2000" name="Nature">
        <title>Sequence and analysis of chromosome 1 of the plant Arabidopsis thaliana.</title>
        <authorList>
            <person name="Theologis A."/>
            <person name="Ecker J.R."/>
            <person name="Palm C.J."/>
            <person name="Federspiel N.A."/>
            <person name="Kaul S."/>
            <person name="White O."/>
            <person name="Alonso J."/>
            <person name="Altafi H."/>
            <person name="Araujo R."/>
            <person name="Bowman C.L."/>
            <person name="Brooks S.Y."/>
            <person name="Buehler E."/>
            <person name="Chan A."/>
            <person name="Chao Q."/>
            <person name="Chen H."/>
            <person name="Cheuk R.F."/>
            <person name="Chin C.W."/>
            <person name="Chung M.K."/>
            <person name="Conn L."/>
            <person name="Conway A.B."/>
            <person name="Conway A.R."/>
            <person name="Creasy T.H."/>
            <person name="Dewar K."/>
            <person name="Dunn P."/>
            <person name="Etgu P."/>
            <person name="Feldblyum T.V."/>
            <person name="Feng J.-D."/>
            <person name="Fong B."/>
            <person name="Fujii C.Y."/>
            <person name="Gill J.E."/>
            <person name="Goldsmith A.D."/>
            <person name="Haas B."/>
            <person name="Hansen N.F."/>
            <person name="Hughes B."/>
            <person name="Huizar L."/>
            <person name="Hunter J.L."/>
            <person name="Jenkins J."/>
            <person name="Johnson-Hopson C."/>
            <person name="Khan S."/>
            <person name="Khaykin E."/>
            <person name="Kim C.J."/>
            <person name="Koo H.L."/>
            <person name="Kremenetskaia I."/>
            <person name="Kurtz D.B."/>
            <person name="Kwan A."/>
            <person name="Lam B."/>
            <person name="Langin-Hooper S."/>
            <person name="Lee A."/>
            <person name="Lee J.M."/>
            <person name="Lenz C.A."/>
            <person name="Li J.H."/>
            <person name="Li Y.-P."/>
            <person name="Lin X."/>
            <person name="Liu S.X."/>
            <person name="Liu Z.A."/>
            <person name="Luros J.S."/>
            <person name="Maiti R."/>
            <person name="Marziali A."/>
            <person name="Militscher J."/>
            <person name="Miranda M."/>
            <person name="Nguyen M."/>
            <person name="Nierman W.C."/>
            <person name="Osborne B.I."/>
            <person name="Pai G."/>
            <person name="Peterson J."/>
            <person name="Pham P.K."/>
            <person name="Rizzo M."/>
            <person name="Rooney T."/>
            <person name="Rowley D."/>
            <person name="Sakano H."/>
            <person name="Salzberg S.L."/>
            <person name="Schwartz J.R."/>
            <person name="Shinn P."/>
            <person name="Southwick A.M."/>
            <person name="Sun H."/>
            <person name="Tallon L.J."/>
            <person name="Tambunga G."/>
            <person name="Toriumi M.J."/>
            <person name="Town C.D."/>
            <person name="Utterback T."/>
            <person name="Van Aken S."/>
            <person name="Vaysberg M."/>
            <person name="Vysotskaia V.S."/>
            <person name="Walker M."/>
            <person name="Wu D."/>
            <person name="Yu G."/>
            <person name="Fraser C.M."/>
            <person name="Venter J.C."/>
            <person name="Davis R.W."/>
        </authorList>
    </citation>
    <scope>NUCLEOTIDE SEQUENCE [LARGE SCALE GENOMIC DNA]</scope>
    <source>
        <strain>cv. Columbia</strain>
    </source>
</reference>
<reference key="2">
    <citation type="journal article" date="2017" name="Plant J.">
        <title>Araport11: a complete reannotation of the Arabidopsis thaliana reference genome.</title>
        <authorList>
            <person name="Cheng C.Y."/>
            <person name="Krishnakumar V."/>
            <person name="Chan A.P."/>
            <person name="Thibaud-Nissen F."/>
            <person name="Schobel S."/>
            <person name="Town C.D."/>
        </authorList>
    </citation>
    <scope>GENOME REANNOTATION</scope>
    <source>
        <strain>cv. Columbia</strain>
    </source>
</reference>
<reference key="3">
    <citation type="journal article" date="2003" name="Science">
        <title>Empirical analysis of transcriptional activity in the Arabidopsis genome.</title>
        <authorList>
            <person name="Yamada K."/>
            <person name="Lim J."/>
            <person name="Dale J.M."/>
            <person name="Chen H."/>
            <person name="Shinn P."/>
            <person name="Palm C.J."/>
            <person name="Southwick A.M."/>
            <person name="Wu H.C."/>
            <person name="Kim C.J."/>
            <person name="Nguyen M."/>
            <person name="Pham P.K."/>
            <person name="Cheuk R.F."/>
            <person name="Karlin-Newmann G."/>
            <person name="Liu S.X."/>
            <person name="Lam B."/>
            <person name="Sakano H."/>
            <person name="Wu T."/>
            <person name="Yu G."/>
            <person name="Miranda M."/>
            <person name="Quach H.L."/>
            <person name="Tripp M."/>
            <person name="Chang C.H."/>
            <person name="Lee J.M."/>
            <person name="Toriumi M.J."/>
            <person name="Chan M.M."/>
            <person name="Tang C.C."/>
            <person name="Onodera C.S."/>
            <person name="Deng J.M."/>
            <person name="Akiyama K."/>
            <person name="Ansari Y."/>
            <person name="Arakawa T."/>
            <person name="Banh J."/>
            <person name="Banno F."/>
            <person name="Bowser L."/>
            <person name="Brooks S.Y."/>
            <person name="Carninci P."/>
            <person name="Chao Q."/>
            <person name="Choy N."/>
            <person name="Enju A."/>
            <person name="Goldsmith A.D."/>
            <person name="Gurjal M."/>
            <person name="Hansen N.F."/>
            <person name="Hayashizaki Y."/>
            <person name="Johnson-Hopson C."/>
            <person name="Hsuan V.W."/>
            <person name="Iida K."/>
            <person name="Karnes M."/>
            <person name="Khan S."/>
            <person name="Koesema E."/>
            <person name="Ishida J."/>
            <person name="Jiang P.X."/>
            <person name="Jones T."/>
            <person name="Kawai J."/>
            <person name="Kamiya A."/>
            <person name="Meyers C."/>
            <person name="Nakajima M."/>
            <person name="Narusaka M."/>
            <person name="Seki M."/>
            <person name="Sakurai T."/>
            <person name="Satou M."/>
            <person name="Tamse R."/>
            <person name="Vaysberg M."/>
            <person name="Wallender E.K."/>
            <person name="Wong C."/>
            <person name="Yamamura Y."/>
            <person name="Yuan S."/>
            <person name="Shinozaki K."/>
            <person name="Davis R.W."/>
            <person name="Theologis A."/>
            <person name="Ecker J.R."/>
        </authorList>
    </citation>
    <scope>NUCLEOTIDE SEQUENCE [LARGE SCALE MRNA]</scope>
    <source>
        <strain>cv. Columbia</strain>
    </source>
</reference>
<reference key="4">
    <citation type="submission" date="2006-07" db="EMBL/GenBank/DDBJ databases">
        <title>Large-scale analysis of RIKEN Arabidopsis full-length (RAFL) cDNAs.</title>
        <authorList>
            <person name="Totoki Y."/>
            <person name="Seki M."/>
            <person name="Ishida J."/>
            <person name="Nakajima M."/>
            <person name="Enju A."/>
            <person name="Kamiya A."/>
            <person name="Narusaka M."/>
            <person name="Shin-i T."/>
            <person name="Nakagawa M."/>
            <person name="Sakamoto N."/>
            <person name="Oishi K."/>
            <person name="Kohara Y."/>
            <person name="Kobayashi M."/>
            <person name="Toyoda A."/>
            <person name="Sakaki Y."/>
            <person name="Sakurai T."/>
            <person name="Iida K."/>
            <person name="Akiyama K."/>
            <person name="Satou M."/>
            <person name="Toyoda T."/>
            <person name="Konagaya A."/>
            <person name="Carninci P."/>
            <person name="Kawai J."/>
            <person name="Hayashizaki Y."/>
            <person name="Shinozaki K."/>
        </authorList>
    </citation>
    <scope>NUCLEOTIDE SEQUENCE [LARGE SCALE MRNA]</scope>
    <source>
        <strain>cv. Columbia</strain>
    </source>
</reference>
<reference key="5">
    <citation type="journal article" date="2012" name="Mol. Cell. Proteomics">
        <title>Comparative large-scale characterisation of plant vs. mammal proteins reveals similar and idiosyncratic N-alpha acetylation features.</title>
        <authorList>
            <person name="Bienvenut W.V."/>
            <person name="Sumpton D."/>
            <person name="Martinez A."/>
            <person name="Lilla S."/>
            <person name="Espagne C."/>
            <person name="Meinnel T."/>
            <person name="Giglione C."/>
        </authorList>
    </citation>
    <scope>ACETYLATION [LARGE SCALE ANALYSIS] AT MET-1</scope>
    <scope>IDENTIFICATION BY MASS SPECTROMETRY [LARGE SCALE ANALYSIS]</scope>
</reference>
<reference key="6">
    <citation type="submission" date="2004-11" db="PDB data bank">
        <title>Solution structure of ubiquitin-like domain in splicing factor AAL91182.</title>
        <authorList>
            <consortium name="RIKEN structural genomics initiative (RSGI)"/>
        </authorList>
    </citation>
    <scope>STRUCTURE BY NMR OF 683-780</scope>
</reference>
<evidence type="ECO:0000250" key="1"/>
<evidence type="ECO:0000255" key="2">
    <source>
        <dbReference type="PROSITE-ProRule" id="PRU00214"/>
    </source>
</evidence>
<evidence type="ECO:0000256" key="3">
    <source>
        <dbReference type="SAM" id="MobiDB-lite"/>
    </source>
</evidence>
<evidence type="ECO:0000305" key="4"/>
<evidence type="ECO:0007744" key="5">
    <source>
    </source>
</evidence>
<evidence type="ECO:0007829" key="6">
    <source>
        <dbReference type="PDB" id="1WE6"/>
    </source>
</evidence>
<gene>
    <name type="ordered locus">At1g14650</name>
    <name type="ORF">T5E21.13</name>
</gene>
<proteinExistence type="evidence at protein level"/>
<keyword id="KW-0002">3D-structure</keyword>
<keyword id="KW-0007">Acetylation</keyword>
<keyword id="KW-0507">mRNA processing</keyword>
<keyword id="KW-0508">mRNA splicing</keyword>
<keyword id="KW-0539">Nucleus</keyword>
<keyword id="KW-1185">Reference proteome</keyword>
<keyword id="KW-0677">Repeat</keyword>
<keyword id="KW-0747">Spliceosome</keyword>
<comment type="subunit">
    <text evidence="1">Component of splicing factor SF3A which is composed of three subunits.</text>
</comment>
<comment type="subcellular location">
    <subcellularLocation>
        <location evidence="1">Nucleus</location>
    </subcellularLocation>
</comment>
<comment type="domain">
    <text evidence="1">SURP motif 2 mediates direct binding to SF3A3.</text>
</comment>
<comment type="sequence caution" evidence="4">
    <conflict type="erroneous gene model prediction">
        <sequence resource="EMBL-CDS" id="AAF63169"/>
    </conflict>
</comment>
<dbReference type="EMBL" id="AC010657">
    <property type="protein sequence ID" value="AAF63169.1"/>
    <property type="status" value="ALT_SEQ"/>
    <property type="molecule type" value="Genomic_DNA"/>
</dbReference>
<dbReference type="EMBL" id="CP002684">
    <property type="protein sequence ID" value="AEE29196.1"/>
    <property type="molecule type" value="Genomic_DNA"/>
</dbReference>
<dbReference type="EMBL" id="CP002684">
    <property type="protein sequence ID" value="AEE29197.1"/>
    <property type="molecule type" value="Genomic_DNA"/>
</dbReference>
<dbReference type="EMBL" id="CP002684">
    <property type="protein sequence ID" value="ANM61051.1"/>
    <property type="molecule type" value="Genomic_DNA"/>
</dbReference>
<dbReference type="EMBL" id="AY081293">
    <property type="protein sequence ID" value="AAL91182.1"/>
    <property type="molecule type" value="mRNA"/>
</dbReference>
<dbReference type="EMBL" id="AK226440">
    <property type="protein sequence ID" value="BAE98583.1"/>
    <property type="molecule type" value="mRNA"/>
</dbReference>
<dbReference type="PIR" id="G86280">
    <property type="entry name" value="G86280"/>
</dbReference>
<dbReference type="RefSeq" id="NP_001117289.1">
    <property type="nucleotide sequence ID" value="NM_001123817.1"/>
</dbReference>
<dbReference type="RefSeq" id="NP_001319005.1">
    <property type="nucleotide sequence ID" value="NM_001332131.1"/>
</dbReference>
<dbReference type="RefSeq" id="NP_172917.1">
    <property type="nucleotide sequence ID" value="NM_101332.4"/>
</dbReference>
<dbReference type="PDB" id="1WE6">
    <property type="method" value="NMR"/>
    <property type="chains" value="A=683-780"/>
</dbReference>
<dbReference type="PDBsum" id="1WE6"/>
<dbReference type="SMR" id="Q8RXF1"/>
<dbReference type="BioGRID" id="23267">
    <property type="interactions" value="3"/>
</dbReference>
<dbReference type="FunCoup" id="Q8RXF1">
    <property type="interactions" value="4793"/>
</dbReference>
<dbReference type="IntAct" id="Q8RXF1">
    <property type="interactions" value="1"/>
</dbReference>
<dbReference type="MINT" id="Q8RXF1"/>
<dbReference type="STRING" id="3702.Q8RXF1"/>
<dbReference type="GlyGen" id="Q8RXF1">
    <property type="glycosylation" value="1 site"/>
</dbReference>
<dbReference type="iPTMnet" id="Q8RXF1"/>
<dbReference type="PaxDb" id="3702-AT1G14650.2"/>
<dbReference type="ProteomicsDB" id="234556"/>
<dbReference type="EnsemblPlants" id="AT1G14650.1">
    <property type="protein sequence ID" value="AT1G14650.1"/>
    <property type="gene ID" value="AT1G14650"/>
</dbReference>
<dbReference type="EnsemblPlants" id="AT1G14650.2">
    <property type="protein sequence ID" value="AT1G14650.2"/>
    <property type="gene ID" value="AT1G14650"/>
</dbReference>
<dbReference type="EnsemblPlants" id="AT1G14650.3">
    <property type="protein sequence ID" value="AT1G14650.3"/>
    <property type="gene ID" value="AT1G14650"/>
</dbReference>
<dbReference type="GeneID" id="838027"/>
<dbReference type="Gramene" id="AT1G14650.1">
    <property type="protein sequence ID" value="AT1G14650.1"/>
    <property type="gene ID" value="AT1G14650"/>
</dbReference>
<dbReference type="Gramene" id="AT1G14650.2">
    <property type="protein sequence ID" value="AT1G14650.2"/>
    <property type="gene ID" value="AT1G14650"/>
</dbReference>
<dbReference type="Gramene" id="AT1G14650.3">
    <property type="protein sequence ID" value="AT1G14650.3"/>
    <property type="gene ID" value="AT1G14650"/>
</dbReference>
<dbReference type="KEGG" id="ath:AT1G14650"/>
<dbReference type="Araport" id="AT1G14650"/>
<dbReference type="TAIR" id="AT1G14650"/>
<dbReference type="eggNOG" id="KOG0007">
    <property type="taxonomic scope" value="Eukaryota"/>
</dbReference>
<dbReference type="HOGENOM" id="CLU_013259_1_0_1"/>
<dbReference type="InParanoid" id="Q8RXF1"/>
<dbReference type="OMA" id="HAYYRHR"/>
<dbReference type="OrthoDB" id="447637at2759"/>
<dbReference type="PhylomeDB" id="Q8RXF1"/>
<dbReference type="CD-CODE" id="4299E36E">
    <property type="entry name" value="Nucleolus"/>
</dbReference>
<dbReference type="EvolutionaryTrace" id="Q8RXF1"/>
<dbReference type="PRO" id="PR:Q8RXF1"/>
<dbReference type="Proteomes" id="UP000006548">
    <property type="component" value="Chromosome 1"/>
</dbReference>
<dbReference type="ExpressionAtlas" id="Q8RXF1">
    <property type="expression patterns" value="baseline and differential"/>
</dbReference>
<dbReference type="GO" id="GO:0005684">
    <property type="term" value="C:U2-type spliceosomal complex"/>
    <property type="evidence" value="ECO:0000250"/>
    <property type="project" value="UniProtKB"/>
</dbReference>
<dbReference type="GO" id="GO:0003723">
    <property type="term" value="F:RNA binding"/>
    <property type="evidence" value="ECO:0000250"/>
    <property type="project" value="UniProtKB"/>
</dbReference>
<dbReference type="GO" id="GO:0045292">
    <property type="term" value="P:mRNA cis splicing, via spliceosome"/>
    <property type="evidence" value="ECO:0007669"/>
    <property type="project" value="InterPro"/>
</dbReference>
<dbReference type="GO" id="GO:0000398">
    <property type="term" value="P:mRNA splicing, via spliceosome"/>
    <property type="evidence" value="ECO:0000250"/>
    <property type="project" value="UniProtKB"/>
</dbReference>
<dbReference type="CDD" id="cd01800">
    <property type="entry name" value="Ubl_SF3a120"/>
    <property type="match status" value="1"/>
</dbReference>
<dbReference type="FunFam" id="3.10.20.90:FF:000178">
    <property type="entry name" value="Probable splicing factor 3A subunit 1"/>
    <property type="match status" value="1"/>
</dbReference>
<dbReference type="FunFam" id="1.10.10.790:FF:000002">
    <property type="entry name" value="Splicing factor 3A subunit 1"/>
    <property type="match status" value="1"/>
</dbReference>
<dbReference type="FunFam" id="1.10.10.790:FF:000001">
    <property type="entry name" value="Splicing factor 3a, subunit 1"/>
    <property type="match status" value="1"/>
</dbReference>
<dbReference type="Gene3D" id="3.10.20.90">
    <property type="entry name" value="Phosphatidylinositol 3-kinase Catalytic Subunit, Chain A, domain 1"/>
    <property type="match status" value="1"/>
</dbReference>
<dbReference type="Gene3D" id="1.10.10.790">
    <property type="entry name" value="Surp module"/>
    <property type="match status" value="2"/>
</dbReference>
<dbReference type="InterPro" id="IPR045146">
    <property type="entry name" value="SF3A1"/>
</dbReference>
<dbReference type="InterPro" id="IPR022030">
    <property type="entry name" value="SF3A1_dom"/>
</dbReference>
<dbReference type="InterPro" id="IPR035563">
    <property type="entry name" value="SF3As1_ubi"/>
</dbReference>
<dbReference type="InterPro" id="IPR000061">
    <property type="entry name" value="Surp"/>
</dbReference>
<dbReference type="InterPro" id="IPR035967">
    <property type="entry name" value="SWAP/Surp_sf"/>
</dbReference>
<dbReference type="InterPro" id="IPR000626">
    <property type="entry name" value="Ubiquitin-like_dom"/>
</dbReference>
<dbReference type="InterPro" id="IPR029071">
    <property type="entry name" value="Ubiquitin-like_domsf"/>
</dbReference>
<dbReference type="PANTHER" id="PTHR15316">
    <property type="entry name" value="SPLICEOSOME ASSOCIATED PROTEIN 114/SWAP SPLICING FACTOR-RELATED"/>
    <property type="match status" value="1"/>
</dbReference>
<dbReference type="PANTHER" id="PTHR15316:SF1">
    <property type="entry name" value="SPLICING FACTOR 3A SUBUNIT 1"/>
    <property type="match status" value="1"/>
</dbReference>
<dbReference type="Pfam" id="PF12230">
    <property type="entry name" value="PRP21_like_P"/>
    <property type="match status" value="1"/>
</dbReference>
<dbReference type="Pfam" id="PF01805">
    <property type="entry name" value="Surp"/>
    <property type="match status" value="2"/>
</dbReference>
<dbReference type="Pfam" id="PF00240">
    <property type="entry name" value="ubiquitin"/>
    <property type="match status" value="1"/>
</dbReference>
<dbReference type="SMART" id="SM00648">
    <property type="entry name" value="SWAP"/>
    <property type="match status" value="2"/>
</dbReference>
<dbReference type="SMART" id="SM00213">
    <property type="entry name" value="UBQ"/>
    <property type="match status" value="1"/>
</dbReference>
<dbReference type="SUPFAM" id="SSF109905">
    <property type="entry name" value="Surp module (SWAP domain)"/>
    <property type="match status" value="2"/>
</dbReference>
<dbReference type="SUPFAM" id="SSF54236">
    <property type="entry name" value="Ubiquitin-like"/>
    <property type="match status" value="1"/>
</dbReference>
<dbReference type="PROSITE" id="PS50128">
    <property type="entry name" value="SURP"/>
    <property type="match status" value="2"/>
</dbReference>
<dbReference type="PROSITE" id="PS50053">
    <property type="entry name" value="UBIQUITIN_2"/>
    <property type="match status" value="1"/>
</dbReference>
<protein>
    <recommendedName>
        <fullName>Probable splicing factor 3A subunit 1</fullName>
    </recommendedName>
</protein>
<organism>
    <name type="scientific">Arabidopsis thaliana</name>
    <name type="common">Mouse-ear cress</name>
    <dbReference type="NCBI Taxonomy" id="3702"/>
    <lineage>
        <taxon>Eukaryota</taxon>
        <taxon>Viridiplantae</taxon>
        <taxon>Streptophyta</taxon>
        <taxon>Embryophyta</taxon>
        <taxon>Tracheophyta</taxon>
        <taxon>Spermatophyta</taxon>
        <taxon>Magnoliopsida</taxon>
        <taxon>eudicotyledons</taxon>
        <taxon>Gunneridae</taxon>
        <taxon>Pentapetalae</taxon>
        <taxon>rosids</taxon>
        <taxon>malvids</taxon>
        <taxon>Brassicales</taxon>
        <taxon>Brassicaceae</taxon>
        <taxon>Camelineae</taxon>
        <taxon>Arabidopsis</taxon>
    </lineage>
</organism>
<feature type="chain" id="PRO_0000114919" description="Probable splicing factor 3A subunit 1">
    <location>
        <begin position="1"/>
        <end position="785"/>
    </location>
</feature>
<feature type="repeat" description="SURP motif 1">
    <location>
        <begin position="71"/>
        <end position="113"/>
    </location>
</feature>
<feature type="repeat" description="SURP motif 2">
    <location>
        <begin position="193"/>
        <end position="235"/>
    </location>
</feature>
<feature type="domain" description="Ubiquitin-like" evidence="2">
    <location>
        <begin position="707"/>
        <end position="782"/>
    </location>
</feature>
<feature type="region of interest" description="Disordered" evidence="3">
    <location>
        <begin position="1"/>
        <end position="42"/>
    </location>
</feature>
<feature type="region of interest" description="Disordered" evidence="3">
    <location>
        <begin position="124"/>
        <end position="175"/>
    </location>
</feature>
<feature type="region of interest" description="Disordered" evidence="3">
    <location>
        <begin position="522"/>
        <end position="554"/>
    </location>
</feature>
<feature type="region of interest" description="Disordered" evidence="3">
    <location>
        <begin position="639"/>
        <end position="713"/>
    </location>
</feature>
<feature type="compositionally biased region" description="Pro residues" evidence="3">
    <location>
        <begin position="543"/>
        <end position="554"/>
    </location>
</feature>
<feature type="compositionally biased region" description="Pro residues" evidence="3">
    <location>
        <begin position="653"/>
        <end position="674"/>
    </location>
</feature>
<feature type="compositionally biased region" description="Basic and acidic residues" evidence="3">
    <location>
        <begin position="677"/>
        <end position="686"/>
    </location>
</feature>
<feature type="site" description="Critical for binding to SF3A3" evidence="1">
    <location>
        <position position="196"/>
    </location>
</feature>
<feature type="modified residue" description="N-acetylmethionine" evidence="5">
    <location>
        <position position="1"/>
    </location>
</feature>
<feature type="sequence conflict" description="In Ref. 3; AAL91182." evidence="4" ref="3">
    <original>D</original>
    <variation>G</variation>
    <location>
        <position position="289"/>
    </location>
</feature>
<feature type="helix" evidence="6">
    <location>
        <begin position="686"/>
        <end position="688"/>
    </location>
</feature>
<feature type="helix" evidence="6">
    <location>
        <begin position="692"/>
        <end position="698"/>
    </location>
</feature>
<feature type="strand" evidence="6">
    <location>
        <begin position="703"/>
        <end position="707"/>
    </location>
</feature>
<feature type="strand" evidence="6">
    <location>
        <begin position="713"/>
        <end position="715"/>
    </location>
</feature>
<feature type="strand" evidence="6">
    <location>
        <begin position="718"/>
        <end position="723"/>
    </location>
</feature>
<feature type="strand" evidence="6">
    <location>
        <begin position="725"/>
        <end position="728"/>
    </location>
</feature>
<feature type="helix" evidence="6">
    <location>
        <begin position="729"/>
        <end position="739"/>
    </location>
</feature>
<feature type="turn" evidence="6">
    <location>
        <begin position="744"/>
        <end position="746"/>
    </location>
</feature>
<feature type="strand" evidence="6">
    <location>
        <begin position="747"/>
        <end position="750"/>
    </location>
</feature>
<feature type="strand" evidence="6">
    <location>
        <begin position="752"/>
        <end position="755"/>
    </location>
</feature>
<feature type="turn" evidence="6">
    <location>
        <begin position="762"/>
        <end position="766"/>
    </location>
</feature>
<feature type="strand" evidence="6">
    <location>
        <begin position="768"/>
        <end position="770"/>
    </location>
</feature>
<feature type="strand" evidence="6">
    <location>
        <begin position="772"/>
        <end position="776"/>
    </location>
</feature>
<name>SF3A1_ARATH</name>